<keyword id="KW-0227">DNA damage</keyword>
<keyword id="KW-0233">DNA recombination</keyword>
<keyword id="KW-0234">DNA repair</keyword>
<keyword id="KW-0479">Metal-binding</keyword>
<keyword id="KW-0862">Zinc</keyword>
<keyword id="KW-0863">Zinc-finger</keyword>
<comment type="function">
    <text evidence="1">May play a role in DNA repair. It seems to be involved in an RecBC-independent recombinational process of DNA repair. It may act with RecF and RecO.</text>
</comment>
<comment type="similarity">
    <text evidence="1">Belongs to the RecR family.</text>
</comment>
<organism>
    <name type="scientific">Rickettsia peacockii (strain Rustic)</name>
    <dbReference type="NCBI Taxonomy" id="562019"/>
    <lineage>
        <taxon>Bacteria</taxon>
        <taxon>Pseudomonadati</taxon>
        <taxon>Pseudomonadota</taxon>
        <taxon>Alphaproteobacteria</taxon>
        <taxon>Rickettsiales</taxon>
        <taxon>Rickettsiaceae</taxon>
        <taxon>Rickettsieae</taxon>
        <taxon>Rickettsia</taxon>
        <taxon>spotted fever group</taxon>
    </lineage>
</organism>
<sequence>MNETNDNDIDQLIYLFSKLPGLGIRSARRIALYLLQDKDVRLKSLINNLVEIDKKIVKCEICGNMDTENICRICSSEYRDKSIIAIVETVAELWAMERSGNFKGLYHVFGHNLSAASRQNPSILRLPELLTRCFAENIKEVIIATNSTLEGQTTAYFITEYLKEHPAKISRLASGIPIGGELDYLDDGTVSAAINLRQPFE</sequence>
<feature type="chain" id="PRO_1000201870" description="Recombination protein RecR">
    <location>
        <begin position="1"/>
        <end position="201"/>
    </location>
</feature>
<feature type="domain" description="Toprim" evidence="1">
    <location>
        <begin position="82"/>
        <end position="177"/>
    </location>
</feature>
<feature type="zinc finger region" description="C4-type" evidence="1">
    <location>
        <begin position="59"/>
        <end position="74"/>
    </location>
</feature>
<dbReference type="EMBL" id="CP001227">
    <property type="protein sequence ID" value="ACR47094.1"/>
    <property type="molecule type" value="Genomic_DNA"/>
</dbReference>
<dbReference type="RefSeq" id="WP_012736394.1">
    <property type="nucleotide sequence ID" value="NC_012730.1"/>
</dbReference>
<dbReference type="SMR" id="C4K0J3"/>
<dbReference type="KEGG" id="rpk:RPR_00600"/>
<dbReference type="HOGENOM" id="CLU_060739_1_1_5"/>
<dbReference type="Proteomes" id="UP000005015">
    <property type="component" value="Chromosome"/>
</dbReference>
<dbReference type="GO" id="GO:0003677">
    <property type="term" value="F:DNA binding"/>
    <property type="evidence" value="ECO:0007669"/>
    <property type="project" value="UniProtKB-UniRule"/>
</dbReference>
<dbReference type="GO" id="GO:0008270">
    <property type="term" value="F:zinc ion binding"/>
    <property type="evidence" value="ECO:0007669"/>
    <property type="project" value="UniProtKB-KW"/>
</dbReference>
<dbReference type="GO" id="GO:0006310">
    <property type="term" value="P:DNA recombination"/>
    <property type="evidence" value="ECO:0007669"/>
    <property type="project" value="UniProtKB-UniRule"/>
</dbReference>
<dbReference type="GO" id="GO:0006281">
    <property type="term" value="P:DNA repair"/>
    <property type="evidence" value="ECO:0007669"/>
    <property type="project" value="UniProtKB-UniRule"/>
</dbReference>
<dbReference type="CDD" id="cd01025">
    <property type="entry name" value="TOPRIM_recR"/>
    <property type="match status" value="1"/>
</dbReference>
<dbReference type="Gene3D" id="3.40.1360.10">
    <property type="match status" value="1"/>
</dbReference>
<dbReference type="Gene3D" id="1.10.8.420">
    <property type="entry name" value="RecR Domain 1"/>
    <property type="match status" value="1"/>
</dbReference>
<dbReference type="HAMAP" id="MF_00017">
    <property type="entry name" value="RecR"/>
    <property type="match status" value="1"/>
</dbReference>
<dbReference type="InterPro" id="IPR000093">
    <property type="entry name" value="DNA_Rcmb_RecR"/>
</dbReference>
<dbReference type="InterPro" id="IPR023627">
    <property type="entry name" value="Rcmb_RecR"/>
</dbReference>
<dbReference type="InterPro" id="IPR015967">
    <property type="entry name" value="Rcmb_RecR_Znf"/>
</dbReference>
<dbReference type="InterPro" id="IPR006171">
    <property type="entry name" value="TOPRIM_dom"/>
</dbReference>
<dbReference type="InterPro" id="IPR034137">
    <property type="entry name" value="TOPRIM_RecR"/>
</dbReference>
<dbReference type="NCBIfam" id="TIGR00615">
    <property type="entry name" value="recR"/>
    <property type="match status" value="1"/>
</dbReference>
<dbReference type="PANTHER" id="PTHR30446">
    <property type="entry name" value="RECOMBINATION PROTEIN RECR"/>
    <property type="match status" value="1"/>
</dbReference>
<dbReference type="PANTHER" id="PTHR30446:SF0">
    <property type="entry name" value="RECOMBINATION PROTEIN RECR"/>
    <property type="match status" value="1"/>
</dbReference>
<dbReference type="Pfam" id="PF21175">
    <property type="entry name" value="RecR_C"/>
    <property type="match status" value="1"/>
</dbReference>
<dbReference type="Pfam" id="PF21176">
    <property type="entry name" value="RecR_HhH"/>
    <property type="match status" value="1"/>
</dbReference>
<dbReference type="Pfam" id="PF02132">
    <property type="entry name" value="RecR_ZnF"/>
    <property type="match status" value="1"/>
</dbReference>
<dbReference type="Pfam" id="PF13662">
    <property type="entry name" value="Toprim_4"/>
    <property type="match status" value="1"/>
</dbReference>
<dbReference type="SMART" id="SM00493">
    <property type="entry name" value="TOPRIM"/>
    <property type="match status" value="1"/>
</dbReference>
<dbReference type="SUPFAM" id="SSF111304">
    <property type="entry name" value="Recombination protein RecR"/>
    <property type="match status" value="1"/>
</dbReference>
<dbReference type="PROSITE" id="PS01300">
    <property type="entry name" value="RECR"/>
    <property type="match status" value="1"/>
</dbReference>
<dbReference type="PROSITE" id="PS50880">
    <property type="entry name" value="TOPRIM"/>
    <property type="match status" value="1"/>
</dbReference>
<protein>
    <recommendedName>
        <fullName evidence="1">Recombination protein RecR</fullName>
    </recommendedName>
</protein>
<name>RECR_RICPU</name>
<evidence type="ECO:0000255" key="1">
    <source>
        <dbReference type="HAMAP-Rule" id="MF_00017"/>
    </source>
</evidence>
<accession>C4K0J3</accession>
<gene>
    <name evidence="1" type="primary">recR</name>
    <name type="ordered locus">RPR_00600</name>
</gene>
<reference key="1">
    <citation type="journal article" date="2009" name="PLoS ONE">
        <title>Genome sequence of the endosymbiont Rickettsia peacockii and comparison with virulent Rickettsia rickettsii: identification of virulence factors.</title>
        <authorList>
            <person name="Felsheim R.F."/>
            <person name="Kurtti T.J."/>
            <person name="Munderloh U.G."/>
        </authorList>
    </citation>
    <scope>NUCLEOTIDE SEQUENCE [LARGE SCALE GENOMIC DNA]</scope>
    <source>
        <strain>Rustic</strain>
    </source>
</reference>
<proteinExistence type="inferred from homology"/>